<evidence type="ECO:0000255" key="1">
    <source>
        <dbReference type="HAMAP-Rule" id="MF_03105"/>
    </source>
</evidence>
<evidence type="ECO:0000256" key="2">
    <source>
        <dbReference type="SAM" id="MobiDB-lite"/>
    </source>
</evidence>
<dbReference type="EMBL" id="BA000050">
    <property type="protein sequence ID" value="BAE58310.1"/>
    <property type="molecule type" value="Genomic_DNA"/>
</dbReference>
<dbReference type="RefSeq" id="XP_001820312.1">
    <property type="nucleotide sequence ID" value="XM_001820260.2"/>
</dbReference>
<dbReference type="SMR" id="Q2UJF5"/>
<dbReference type="STRING" id="510516.Q2UJF5"/>
<dbReference type="EnsemblFungi" id="BAE58310">
    <property type="protein sequence ID" value="BAE58310"/>
    <property type="gene ID" value="AO090003001238"/>
</dbReference>
<dbReference type="GeneID" id="5992295"/>
<dbReference type="KEGG" id="aor:AO090003001238"/>
<dbReference type="VEuPathDB" id="FungiDB:AO090003001238"/>
<dbReference type="HOGENOM" id="CLU_036502_1_0_1"/>
<dbReference type="OMA" id="VFRAWSG"/>
<dbReference type="OrthoDB" id="100574at5052"/>
<dbReference type="Proteomes" id="UP000006564">
    <property type="component" value="Chromosome 2"/>
</dbReference>
<dbReference type="GO" id="GO:0032865">
    <property type="term" value="C:ERMES complex"/>
    <property type="evidence" value="ECO:0007669"/>
    <property type="project" value="UniProtKB-UniRule"/>
</dbReference>
<dbReference type="GO" id="GO:0008289">
    <property type="term" value="F:lipid binding"/>
    <property type="evidence" value="ECO:0007669"/>
    <property type="project" value="UniProtKB-KW"/>
</dbReference>
<dbReference type="GO" id="GO:0000002">
    <property type="term" value="P:mitochondrial genome maintenance"/>
    <property type="evidence" value="ECO:0007669"/>
    <property type="project" value="UniProtKB-UniRule"/>
</dbReference>
<dbReference type="GO" id="GO:1990456">
    <property type="term" value="P:mitochondrion-endoplasmic reticulum membrane tethering"/>
    <property type="evidence" value="ECO:0007669"/>
    <property type="project" value="TreeGrafter"/>
</dbReference>
<dbReference type="GO" id="GO:0015914">
    <property type="term" value="P:phospholipid transport"/>
    <property type="evidence" value="ECO:0007669"/>
    <property type="project" value="TreeGrafter"/>
</dbReference>
<dbReference type="CDD" id="cd21673">
    <property type="entry name" value="SMP_Mdm34"/>
    <property type="match status" value="1"/>
</dbReference>
<dbReference type="HAMAP" id="MF_03105">
    <property type="entry name" value="Mdm34"/>
    <property type="match status" value="1"/>
</dbReference>
<dbReference type="InterPro" id="IPR027536">
    <property type="entry name" value="Mdm34"/>
</dbReference>
<dbReference type="InterPro" id="IPR031468">
    <property type="entry name" value="SMP_LBD"/>
</dbReference>
<dbReference type="PANTHER" id="PTHR28185">
    <property type="entry name" value="MITOCHONDRIAL DISTRIBUTION AND MORPHOLOGY PROTEIN 34"/>
    <property type="match status" value="1"/>
</dbReference>
<dbReference type="PANTHER" id="PTHR28185:SF1">
    <property type="entry name" value="MITOCHONDRIAL DISTRIBUTION AND MORPHOLOGY PROTEIN 34"/>
    <property type="match status" value="1"/>
</dbReference>
<dbReference type="PROSITE" id="PS51847">
    <property type="entry name" value="SMP"/>
    <property type="match status" value="1"/>
</dbReference>
<feature type="chain" id="PRO_0000384329" description="Mitochondrial distribution and morphology protein 34">
    <location>
        <begin position="1"/>
        <end position="566"/>
    </location>
</feature>
<feature type="domain" description="SMP-LTD" evidence="1">
    <location>
        <begin position="1"/>
        <end position="195"/>
    </location>
</feature>
<feature type="region of interest" description="Disordered" evidence="2">
    <location>
        <begin position="212"/>
        <end position="237"/>
    </location>
</feature>
<feature type="region of interest" description="Disordered" evidence="2">
    <location>
        <begin position="349"/>
        <end position="401"/>
    </location>
</feature>
<feature type="region of interest" description="Disordered" evidence="2">
    <location>
        <begin position="432"/>
        <end position="518"/>
    </location>
</feature>
<feature type="region of interest" description="Disordered" evidence="2">
    <location>
        <begin position="539"/>
        <end position="566"/>
    </location>
</feature>
<feature type="compositionally biased region" description="Basic residues" evidence="2">
    <location>
        <begin position="358"/>
        <end position="370"/>
    </location>
</feature>
<feature type="compositionally biased region" description="Polar residues" evidence="2">
    <location>
        <begin position="380"/>
        <end position="401"/>
    </location>
</feature>
<feature type="compositionally biased region" description="Basic and acidic residues" evidence="2">
    <location>
        <begin position="444"/>
        <end position="454"/>
    </location>
</feature>
<reference key="1">
    <citation type="journal article" date="2005" name="Nature">
        <title>Genome sequencing and analysis of Aspergillus oryzae.</title>
        <authorList>
            <person name="Machida M."/>
            <person name="Asai K."/>
            <person name="Sano M."/>
            <person name="Tanaka T."/>
            <person name="Kumagai T."/>
            <person name="Terai G."/>
            <person name="Kusumoto K."/>
            <person name="Arima T."/>
            <person name="Akita O."/>
            <person name="Kashiwagi Y."/>
            <person name="Abe K."/>
            <person name="Gomi K."/>
            <person name="Horiuchi H."/>
            <person name="Kitamoto K."/>
            <person name="Kobayashi T."/>
            <person name="Takeuchi M."/>
            <person name="Denning D.W."/>
            <person name="Galagan J.E."/>
            <person name="Nierman W.C."/>
            <person name="Yu J."/>
            <person name="Archer D.B."/>
            <person name="Bennett J.W."/>
            <person name="Bhatnagar D."/>
            <person name="Cleveland T.E."/>
            <person name="Fedorova N.D."/>
            <person name="Gotoh O."/>
            <person name="Horikawa H."/>
            <person name="Hosoyama A."/>
            <person name="Ichinomiya M."/>
            <person name="Igarashi R."/>
            <person name="Iwashita K."/>
            <person name="Juvvadi P.R."/>
            <person name="Kato M."/>
            <person name="Kato Y."/>
            <person name="Kin T."/>
            <person name="Kokubun A."/>
            <person name="Maeda H."/>
            <person name="Maeyama N."/>
            <person name="Maruyama J."/>
            <person name="Nagasaki H."/>
            <person name="Nakajima T."/>
            <person name="Oda K."/>
            <person name="Okada K."/>
            <person name="Paulsen I."/>
            <person name="Sakamoto K."/>
            <person name="Sawano T."/>
            <person name="Takahashi M."/>
            <person name="Takase K."/>
            <person name="Terabayashi Y."/>
            <person name="Wortman J.R."/>
            <person name="Yamada O."/>
            <person name="Yamagata Y."/>
            <person name="Anazawa H."/>
            <person name="Hata Y."/>
            <person name="Koide Y."/>
            <person name="Komori T."/>
            <person name="Koyama Y."/>
            <person name="Minetoki T."/>
            <person name="Suharnan S."/>
            <person name="Tanaka A."/>
            <person name="Isono K."/>
            <person name="Kuhara S."/>
            <person name="Ogasawara N."/>
            <person name="Kikuchi H."/>
        </authorList>
    </citation>
    <scope>NUCLEOTIDE SEQUENCE [LARGE SCALE GENOMIC DNA]</scope>
    <source>
        <strain>ATCC 42149 / RIB 40</strain>
    </source>
</reference>
<keyword id="KW-0445">Lipid transport</keyword>
<keyword id="KW-0446">Lipid-binding</keyword>
<keyword id="KW-0472">Membrane</keyword>
<keyword id="KW-0496">Mitochondrion</keyword>
<keyword id="KW-1000">Mitochondrion outer membrane</keyword>
<keyword id="KW-1185">Reference proteome</keyword>
<keyword id="KW-0812">Transmembrane</keyword>
<keyword id="KW-1134">Transmembrane beta strand</keyword>
<keyword id="KW-0813">Transport</keyword>
<comment type="function">
    <text evidence="1">Component of the ERMES/MDM complex, which serves as a molecular tether to connect the endoplasmic reticulum (ER) and mitochondria. Components of this complex are involved in the control of mitochondrial shape and protein biogenesis, and function in nonvesicular lipid trafficking between the ER and mitochondria. Mdm34 is required for the interaction of the ER-resident membrane protein mmm1 and the outer mitochondrial membrane-resident beta-barrel protein mdm10.</text>
</comment>
<comment type="subunit">
    <text evidence="1">Component of the ER-mitochondria encounter structure (ERMES) or MDM complex, composed of mmm1, mdm10, mdm12 and mdm34.</text>
</comment>
<comment type="subcellular location">
    <subcellularLocation>
        <location evidence="1">Mitochondrion outer membrane</location>
        <topology evidence="1">Multi-pass membrane protein</topology>
    </subcellularLocation>
    <text evidence="1">The ERMES/MDM complex localizes to a few discrete foci (around 10 per single cell), that represent mitochondria-endoplasmic reticulum junctions. These foci are often found next to mtDNA nucleoids.</text>
</comment>
<comment type="domain">
    <text evidence="1">Lacks alpha-helical transmembrane segments, suggesting that it resides in the membrane via beta-sheet conformations similar to those predicted for other outer membrane proteins and porin.</text>
</comment>
<comment type="domain">
    <text evidence="1">The SMP-LTD domain is a barrel-like domain that can bind various types of glycerophospholipids in its interior and mediate their transfer between two adjacent bilayers.</text>
</comment>
<comment type="similarity">
    <text evidence="1">Belongs to the MDM34 family.</text>
</comment>
<organism>
    <name type="scientific">Aspergillus oryzae (strain ATCC 42149 / RIB 40)</name>
    <name type="common">Yellow koji mold</name>
    <dbReference type="NCBI Taxonomy" id="510516"/>
    <lineage>
        <taxon>Eukaryota</taxon>
        <taxon>Fungi</taxon>
        <taxon>Dikarya</taxon>
        <taxon>Ascomycota</taxon>
        <taxon>Pezizomycotina</taxon>
        <taxon>Eurotiomycetes</taxon>
        <taxon>Eurotiomycetidae</taxon>
        <taxon>Eurotiales</taxon>
        <taxon>Aspergillaceae</taxon>
        <taxon>Aspergillus</taxon>
        <taxon>Aspergillus subgen. Circumdati</taxon>
    </lineage>
</organism>
<gene>
    <name evidence="1" type="primary">mdm34</name>
    <name type="ORF">AO090003001238</name>
</gene>
<accession>Q2UJF5</accession>
<protein>
    <recommendedName>
        <fullName evidence="1">Mitochondrial distribution and morphology protein 34</fullName>
    </recommendedName>
</protein>
<proteinExistence type="inferred from homology"/>
<name>MDM34_ASPOR</name>
<sequence>MAFNFNWSPLMADASFYTRAQDLLTAALNKSPKPPIIVDDIIVTELNLGSIPPDLEILEIGDLAEDRFRGIFKMSYTGDAFLTLKTRVQANPLNTYLLTRPSFASPLPLAAATPLTIPLQITLSDFKLSGFVILVFSKQKGITVVFRNDPLESLKVSSTFDSIPFVRDFLQREIEAQLRILFMDELPAIIHRLSLRLWVPEYRAGEDIQTQPEQTAGEGPGQDPLASPPQDPVDSLGNALDESEIASLSLDSSVEAHSLFSQKNLLRLGALTDSQRTLSLFTPSIQEVVYRAWTSPSEQGDANGISTAPLSPMLSRTHSQVGSMSSFQDSASIVSSQSRSSASTHTFSGYGLNLGAGRHSKAHSRKRKKRVVDLRRPKTTSDTASVSDESAYTETASNPSVCSAPLPVVNEQPDPITPPLSPESDFRLPAIPERRRASLSRPVPRRDIATEMLRETGGPSAEPPRHRPQPADVDATPRGSLRAHITAQHDNEKQETGPSRQLPSTILPFTDEKSSSSTVDQALVERLAGEIARRMRDEKLMPTSSCGGAFWGRPDHEEYPPPAYGQ</sequence>